<feature type="chain" id="PRO_0000123172" description="Small ribosomal subunit protein uS11">
    <location>
        <begin position="1"/>
        <end position="129"/>
    </location>
</feature>
<dbReference type="EMBL" id="AE016827">
    <property type="protein sequence ID" value="AAU38632.1"/>
    <property type="molecule type" value="Genomic_DNA"/>
</dbReference>
<dbReference type="RefSeq" id="WP_011201183.1">
    <property type="nucleotide sequence ID" value="NC_006300.1"/>
</dbReference>
<dbReference type="SMR" id="Q65QX8"/>
<dbReference type="STRING" id="221988.MS2025"/>
<dbReference type="KEGG" id="msu:MS2025"/>
<dbReference type="eggNOG" id="COG0100">
    <property type="taxonomic scope" value="Bacteria"/>
</dbReference>
<dbReference type="HOGENOM" id="CLU_072439_5_0_6"/>
<dbReference type="OrthoDB" id="9806415at2"/>
<dbReference type="Proteomes" id="UP000000607">
    <property type="component" value="Chromosome"/>
</dbReference>
<dbReference type="GO" id="GO:1990904">
    <property type="term" value="C:ribonucleoprotein complex"/>
    <property type="evidence" value="ECO:0007669"/>
    <property type="project" value="UniProtKB-KW"/>
</dbReference>
<dbReference type="GO" id="GO:0005840">
    <property type="term" value="C:ribosome"/>
    <property type="evidence" value="ECO:0007669"/>
    <property type="project" value="UniProtKB-KW"/>
</dbReference>
<dbReference type="GO" id="GO:0019843">
    <property type="term" value="F:rRNA binding"/>
    <property type="evidence" value="ECO:0007669"/>
    <property type="project" value="UniProtKB-UniRule"/>
</dbReference>
<dbReference type="GO" id="GO:0003735">
    <property type="term" value="F:structural constituent of ribosome"/>
    <property type="evidence" value="ECO:0007669"/>
    <property type="project" value="InterPro"/>
</dbReference>
<dbReference type="GO" id="GO:0006412">
    <property type="term" value="P:translation"/>
    <property type="evidence" value="ECO:0007669"/>
    <property type="project" value="UniProtKB-UniRule"/>
</dbReference>
<dbReference type="FunFam" id="3.30.420.80:FF:000001">
    <property type="entry name" value="30S ribosomal protein S11"/>
    <property type="match status" value="1"/>
</dbReference>
<dbReference type="Gene3D" id="3.30.420.80">
    <property type="entry name" value="Ribosomal protein S11"/>
    <property type="match status" value="1"/>
</dbReference>
<dbReference type="HAMAP" id="MF_01310">
    <property type="entry name" value="Ribosomal_uS11"/>
    <property type="match status" value="1"/>
</dbReference>
<dbReference type="InterPro" id="IPR001971">
    <property type="entry name" value="Ribosomal_uS11"/>
</dbReference>
<dbReference type="InterPro" id="IPR019981">
    <property type="entry name" value="Ribosomal_uS11_bac-type"/>
</dbReference>
<dbReference type="InterPro" id="IPR018102">
    <property type="entry name" value="Ribosomal_uS11_CS"/>
</dbReference>
<dbReference type="InterPro" id="IPR036967">
    <property type="entry name" value="Ribosomal_uS11_sf"/>
</dbReference>
<dbReference type="NCBIfam" id="NF003698">
    <property type="entry name" value="PRK05309.1"/>
    <property type="match status" value="1"/>
</dbReference>
<dbReference type="NCBIfam" id="TIGR03632">
    <property type="entry name" value="uS11_bact"/>
    <property type="match status" value="1"/>
</dbReference>
<dbReference type="PANTHER" id="PTHR11759">
    <property type="entry name" value="40S RIBOSOMAL PROTEIN S14/30S RIBOSOMAL PROTEIN S11"/>
    <property type="match status" value="1"/>
</dbReference>
<dbReference type="Pfam" id="PF00411">
    <property type="entry name" value="Ribosomal_S11"/>
    <property type="match status" value="1"/>
</dbReference>
<dbReference type="PIRSF" id="PIRSF002131">
    <property type="entry name" value="Ribosomal_S11"/>
    <property type="match status" value="1"/>
</dbReference>
<dbReference type="SUPFAM" id="SSF53137">
    <property type="entry name" value="Translational machinery components"/>
    <property type="match status" value="1"/>
</dbReference>
<dbReference type="PROSITE" id="PS00054">
    <property type="entry name" value="RIBOSOMAL_S11"/>
    <property type="match status" value="1"/>
</dbReference>
<sequence>MAKTPVRARKRVKKQVVDGVAHIHASFNNTIVTITDRQGNALAWATAGGSGFRGSRKSTPFAAQVAAERCAEAVKEFGLKNLEVMVKGPGPGRESTIRALNAAGFRITNITDVTPIPHNGCRPPKKRRV</sequence>
<evidence type="ECO:0000255" key="1">
    <source>
        <dbReference type="HAMAP-Rule" id="MF_01310"/>
    </source>
</evidence>
<evidence type="ECO:0000305" key="2"/>
<name>RS11_MANSM</name>
<keyword id="KW-0687">Ribonucleoprotein</keyword>
<keyword id="KW-0689">Ribosomal protein</keyword>
<keyword id="KW-0694">RNA-binding</keyword>
<keyword id="KW-0699">rRNA-binding</keyword>
<organism>
    <name type="scientific">Mannheimia succiniciproducens (strain KCTC 0769BP / MBEL55E)</name>
    <dbReference type="NCBI Taxonomy" id="221988"/>
    <lineage>
        <taxon>Bacteria</taxon>
        <taxon>Pseudomonadati</taxon>
        <taxon>Pseudomonadota</taxon>
        <taxon>Gammaproteobacteria</taxon>
        <taxon>Pasteurellales</taxon>
        <taxon>Pasteurellaceae</taxon>
        <taxon>Basfia</taxon>
    </lineage>
</organism>
<accession>Q65QX8</accession>
<comment type="function">
    <text evidence="1">Located on the platform of the 30S subunit, it bridges several disparate RNA helices of the 16S rRNA. Forms part of the Shine-Dalgarno cleft in the 70S ribosome.</text>
</comment>
<comment type="subunit">
    <text evidence="1">Part of the 30S ribosomal subunit. Interacts with proteins S7 and S18. Binds to IF-3.</text>
</comment>
<comment type="similarity">
    <text evidence="1">Belongs to the universal ribosomal protein uS11 family.</text>
</comment>
<gene>
    <name evidence="1" type="primary">rpsK</name>
    <name type="ordered locus">MS2025</name>
</gene>
<protein>
    <recommendedName>
        <fullName evidence="1">Small ribosomal subunit protein uS11</fullName>
    </recommendedName>
    <alternativeName>
        <fullName evidence="2">30S ribosomal protein S11</fullName>
    </alternativeName>
</protein>
<proteinExistence type="inferred from homology"/>
<reference key="1">
    <citation type="journal article" date="2004" name="Nat. Biotechnol.">
        <title>The genome sequence of the capnophilic rumen bacterium Mannheimia succiniciproducens.</title>
        <authorList>
            <person name="Hong S.H."/>
            <person name="Kim J.S."/>
            <person name="Lee S.Y."/>
            <person name="In Y.H."/>
            <person name="Choi S.S."/>
            <person name="Rih J.-K."/>
            <person name="Kim C.H."/>
            <person name="Jeong H."/>
            <person name="Hur C.G."/>
            <person name="Kim J.J."/>
        </authorList>
    </citation>
    <scope>NUCLEOTIDE SEQUENCE [LARGE SCALE GENOMIC DNA]</scope>
    <source>
        <strain>KCTC 0769BP / MBEL55E</strain>
    </source>
</reference>